<sequence>MHADTLDAMLHHELPHAAAGCQQAYGRIVTACQNTVTAIALAITRDVAASEDIAQEAFLRAWQRLAQLHQPASFLPWLRQITRNLARDWLRSHRHRPLSGEAADLAIAMAADPSPSPAEQALQVEEERAALEIMSALPNDSREILLLYYREGQRSQQVASLLGLSDAAVRKRLSRARATVRNELLQRFDTFARGSAPGVAFATTVTAATMLAAPGTASAAIALGGIGSLGGVGKLGASGLSGSALTSGSAAGALSVLLGMPMAIALLAITGVTLTTYMSGAYLLRFATTAREAAAIRGFTRLSTLTAALTCGAPLLLRAFGAPKWLALCVLAVGMSVVCYHTLGTLPRIMQPMLERDARRRGTTRPPLLYRCMFSRSAIAVSLAAVIVPIAYRYGVLGLV</sequence>
<name>RFAY_XANCP</name>
<protein>
    <recommendedName>
        <fullName>Probable RNA polymerase sigma factor RfaY</fullName>
    </recommendedName>
</protein>
<proteinExistence type="inferred from homology"/>
<accession>P46358</accession>
<reference key="1">
    <citation type="journal article" date="2002" name="Nature">
        <title>Comparison of the genomes of two Xanthomonas pathogens with differing host specificities.</title>
        <authorList>
            <person name="da Silva A.C.R."/>
            <person name="Ferro J.A."/>
            <person name="Reinach F.C."/>
            <person name="Farah C.S."/>
            <person name="Furlan L.R."/>
            <person name="Quaggio R.B."/>
            <person name="Monteiro-Vitorello C.B."/>
            <person name="Van Sluys M.A."/>
            <person name="Almeida N.F. Jr."/>
            <person name="Alves L.M.C."/>
            <person name="do Amaral A.M."/>
            <person name="Bertolini M.C."/>
            <person name="Camargo L.E.A."/>
            <person name="Camarotte G."/>
            <person name="Cannavan F."/>
            <person name="Cardozo J."/>
            <person name="Chambergo F."/>
            <person name="Ciapina L.P."/>
            <person name="Cicarelli R.M.B."/>
            <person name="Coutinho L.L."/>
            <person name="Cursino-Santos J.R."/>
            <person name="El-Dorry H."/>
            <person name="Faria J.B."/>
            <person name="Ferreira A.J.S."/>
            <person name="Ferreira R.C.C."/>
            <person name="Ferro M.I.T."/>
            <person name="Formighieri E.F."/>
            <person name="Franco M.C."/>
            <person name="Greggio C.C."/>
            <person name="Gruber A."/>
            <person name="Katsuyama A.M."/>
            <person name="Kishi L.T."/>
            <person name="Leite R.P."/>
            <person name="Lemos E.G.M."/>
            <person name="Lemos M.V.F."/>
            <person name="Locali E.C."/>
            <person name="Machado M.A."/>
            <person name="Madeira A.M.B.N."/>
            <person name="Martinez-Rossi N.M."/>
            <person name="Martins E.C."/>
            <person name="Meidanis J."/>
            <person name="Menck C.F.M."/>
            <person name="Miyaki C.Y."/>
            <person name="Moon D.H."/>
            <person name="Moreira L.M."/>
            <person name="Novo M.T.M."/>
            <person name="Okura V.K."/>
            <person name="Oliveira M.C."/>
            <person name="Oliveira V.R."/>
            <person name="Pereira H.A."/>
            <person name="Rossi A."/>
            <person name="Sena J.A.D."/>
            <person name="Silva C."/>
            <person name="de Souza R.F."/>
            <person name="Spinola L.A.F."/>
            <person name="Takita M.A."/>
            <person name="Tamura R.E."/>
            <person name="Teixeira E.C."/>
            <person name="Tezza R.I.D."/>
            <person name="Trindade dos Santos M."/>
            <person name="Truffi D."/>
            <person name="Tsai S.M."/>
            <person name="White F.F."/>
            <person name="Setubal J.C."/>
            <person name="Kitajima J.P."/>
        </authorList>
    </citation>
    <scope>NUCLEOTIDE SEQUENCE [LARGE SCALE GENOMIC DNA]</scope>
    <source>
        <strain>ATCC 33913 / DSM 3586 / NCPPB 528 / LMG 568 / P 25</strain>
    </source>
</reference>
<reference key="2">
    <citation type="journal article" date="1995" name="Mol. Plant Microbe Interact.">
        <title>A locus determining pathogenicity of Xanthomonas campestris is involved in lipopolysaccharide biosynthesis.</title>
        <authorList>
            <person name="Dow J.M."/>
            <person name="Osbourn A.E."/>
            <person name="Wilson T.J."/>
            <person name="Daniels M.J."/>
        </authorList>
    </citation>
    <scope>NUCLEOTIDE SEQUENCE [GENOMIC DNA] OF 1-207</scope>
</reference>
<dbReference type="EMBL" id="AE008922">
    <property type="protein sequence ID" value="AAM40442.1"/>
    <property type="molecule type" value="Genomic_DNA"/>
</dbReference>
<dbReference type="EMBL" id="U19896">
    <property type="protein sequence ID" value="AAA92044.1"/>
    <property type="molecule type" value="Genomic_DNA"/>
</dbReference>
<dbReference type="RefSeq" id="NP_636518.1">
    <property type="nucleotide sequence ID" value="NC_003902.1"/>
</dbReference>
<dbReference type="RefSeq" id="WP_011036343.1">
    <property type="nucleotide sequence ID" value="NC_003902.1"/>
</dbReference>
<dbReference type="SMR" id="P46358"/>
<dbReference type="STRING" id="190485.XCC1143"/>
<dbReference type="EnsemblBacteria" id="AAM40442">
    <property type="protein sequence ID" value="AAM40442"/>
    <property type="gene ID" value="XCC1143"/>
</dbReference>
<dbReference type="KEGG" id="xcc:XCC1143"/>
<dbReference type="PATRIC" id="fig|190485.4.peg.1222"/>
<dbReference type="eggNOG" id="COG1595">
    <property type="taxonomic scope" value="Bacteria"/>
</dbReference>
<dbReference type="HOGENOM" id="CLU_679548_0_0_6"/>
<dbReference type="OrthoDB" id="5757196at2"/>
<dbReference type="Proteomes" id="UP000001010">
    <property type="component" value="Chromosome"/>
</dbReference>
<dbReference type="GO" id="GO:0003677">
    <property type="term" value="F:DNA binding"/>
    <property type="evidence" value="ECO:0007669"/>
    <property type="project" value="UniProtKB-KW"/>
</dbReference>
<dbReference type="GO" id="GO:0016987">
    <property type="term" value="F:sigma factor activity"/>
    <property type="evidence" value="ECO:0000318"/>
    <property type="project" value="GO_Central"/>
</dbReference>
<dbReference type="GO" id="GO:0006352">
    <property type="term" value="P:DNA-templated transcription initiation"/>
    <property type="evidence" value="ECO:0007669"/>
    <property type="project" value="InterPro"/>
</dbReference>
<dbReference type="GO" id="GO:0006355">
    <property type="term" value="P:regulation of DNA-templated transcription"/>
    <property type="evidence" value="ECO:0000318"/>
    <property type="project" value="GO_Central"/>
</dbReference>
<dbReference type="CDD" id="cd06171">
    <property type="entry name" value="Sigma70_r4"/>
    <property type="match status" value="1"/>
</dbReference>
<dbReference type="Gene3D" id="1.10.1740.10">
    <property type="match status" value="1"/>
</dbReference>
<dbReference type="Gene3D" id="1.10.10.10">
    <property type="entry name" value="Winged helix-like DNA-binding domain superfamily/Winged helix DNA-binding domain"/>
    <property type="match status" value="1"/>
</dbReference>
<dbReference type="InterPro" id="IPR039425">
    <property type="entry name" value="RNA_pol_sigma-70-like"/>
</dbReference>
<dbReference type="InterPro" id="IPR014284">
    <property type="entry name" value="RNA_pol_sigma-70_dom"/>
</dbReference>
<dbReference type="InterPro" id="IPR000838">
    <property type="entry name" value="RNA_pol_sigma70_ECF_CS"/>
</dbReference>
<dbReference type="InterPro" id="IPR007627">
    <property type="entry name" value="RNA_pol_sigma70_r2"/>
</dbReference>
<dbReference type="InterPro" id="IPR013249">
    <property type="entry name" value="RNA_pol_sigma70_r4_t2"/>
</dbReference>
<dbReference type="InterPro" id="IPR013325">
    <property type="entry name" value="RNA_pol_sigma_r2"/>
</dbReference>
<dbReference type="InterPro" id="IPR013324">
    <property type="entry name" value="RNA_pol_sigma_r3/r4-like"/>
</dbReference>
<dbReference type="InterPro" id="IPR036388">
    <property type="entry name" value="WH-like_DNA-bd_sf"/>
</dbReference>
<dbReference type="NCBIfam" id="TIGR02937">
    <property type="entry name" value="sigma70-ECF"/>
    <property type="match status" value="1"/>
</dbReference>
<dbReference type="PANTHER" id="PTHR43133">
    <property type="entry name" value="RNA POLYMERASE ECF-TYPE SIGMA FACTO"/>
    <property type="match status" value="1"/>
</dbReference>
<dbReference type="PANTHER" id="PTHR43133:SF25">
    <property type="entry name" value="RNA POLYMERASE SIGMA FACTOR RFAY-RELATED"/>
    <property type="match status" value="1"/>
</dbReference>
<dbReference type="Pfam" id="PF04542">
    <property type="entry name" value="Sigma70_r2"/>
    <property type="match status" value="1"/>
</dbReference>
<dbReference type="Pfam" id="PF08281">
    <property type="entry name" value="Sigma70_r4_2"/>
    <property type="match status" value="1"/>
</dbReference>
<dbReference type="SUPFAM" id="SSF88946">
    <property type="entry name" value="Sigma2 domain of RNA polymerase sigma factors"/>
    <property type="match status" value="1"/>
</dbReference>
<dbReference type="SUPFAM" id="SSF88659">
    <property type="entry name" value="Sigma3 and sigma4 domains of RNA polymerase sigma factors"/>
    <property type="match status" value="1"/>
</dbReference>
<dbReference type="PROSITE" id="PS01063">
    <property type="entry name" value="SIGMA70_ECF"/>
    <property type="match status" value="1"/>
</dbReference>
<gene>
    <name type="primary">rfaY</name>
    <name type="ordered locus">XCC1143</name>
</gene>
<organism>
    <name type="scientific">Xanthomonas campestris pv. campestris (strain ATCC 33913 / DSM 3586 / NCPPB 528 / LMG 568 / P 25)</name>
    <dbReference type="NCBI Taxonomy" id="190485"/>
    <lineage>
        <taxon>Bacteria</taxon>
        <taxon>Pseudomonadati</taxon>
        <taxon>Pseudomonadota</taxon>
        <taxon>Gammaproteobacteria</taxon>
        <taxon>Lysobacterales</taxon>
        <taxon>Lysobacteraceae</taxon>
        <taxon>Xanthomonas</taxon>
    </lineage>
</organism>
<comment type="function">
    <text>Sigma factors are initiation factors that promote the attachment of RNA polymerase to specific initiation sites and are then released. This sigma factor is involved in lipopolysaccharide biosynthesis and pathogenicity.</text>
</comment>
<comment type="similarity">
    <text evidence="2">Belongs to the sigma-70 factor family. ECF subfamily.</text>
</comment>
<keyword id="KW-0238">DNA-binding</keyword>
<keyword id="KW-1185">Reference proteome</keyword>
<keyword id="KW-0731">Sigma factor</keyword>
<keyword id="KW-0804">Transcription</keyword>
<keyword id="KW-0805">Transcription regulation</keyword>
<feature type="chain" id="PRO_0000094013" description="Probable RNA polymerase sigma factor RfaY">
    <location>
        <begin position="1"/>
        <end position="400"/>
    </location>
</feature>
<feature type="DNA-binding region" description="H-T-H motif" evidence="1">
    <location>
        <begin position="165"/>
        <end position="184"/>
    </location>
</feature>
<feature type="short sequence motif" description="Polymerase core binding">
    <location>
        <begin position="62"/>
        <end position="75"/>
    </location>
</feature>
<feature type="sequence conflict" description="In Ref. 2." evidence="2" ref="2">
    <original>MHADTL</original>
    <variation>MLVPGHGFRRCTPTPW</variation>
    <location>
        <begin position="1"/>
        <end position="6"/>
    </location>
</feature>
<feature type="sequence conflict" description="In Ref. 2; AAA92044." evidence="2" ref="2">
    <original>A</original>
    <variation>G</variation>
    <location>
        <position position="19"/>
    </location>
</feature>
<feature type="sequence conflict" description="In Ref. 2; AAA92044." evidence="2" ref="2">
    <original>Q</original>
    <variation>K</variation>
    <location>
        <position position="23"/>
    </location>
</feature>
<feature type="sequence conflict" description="In Ref. 2; AAA92044." evidence="2" ref="2">
    <original>A</original>
    <variation>V</variation>
    <location>
        <position position="31"/>
    </location>
</feature>
<feature type="sequence conflict" description="In Ref. 2; AAA92044." evidence="2" ref="2">
    <original>A</original>
    <variation>P</variation>
    <location>
        <position position="38"/>
    </location>
</feature>
<feature type="sequence conflict" description="In Ref. 2; AAA92044." evidence="2" ref="2">
    <original>A</original>
    <variation>V</variation>
    <location>
        <position position="57"/>
    </location>
</feature>
<feature type="sequence conflict" description="In Ref. 2; AAA92044." evidence="2" ref="2">
    <original>H</original>
    <variation>Y</variation>
    <location>
        <position position="69"/>
    </location>
</feature>
<feature type="sequence conflict" description="In Ref. 2; AAA92044." evidence="2" ref="2">
    <original>Q</original>
    <variation>E</variation>
    <location>
        <position position="80"/>
    </location>
</feature>
<feature type="sequence conflict" description="In Ref. 2; AAA92044." evidence="2" ref="2">
    <original>S</original>
    <variation>I</variation>
    <location>
        <position position="99"/>
    </location>
</feature>
<feature type="sequence conflict" description="In Ref. 2; AAA92044." evidence="2" ref="2">
    <original>A</original>
    <variation>P</variation>
    <location>
        <position position="106"/>
    </location>
</feature>
<feature type="sequence conflict" description="In Ref. 2; AAA92044." evidence="2" ref="2">
    <original>A</original>
    <variation>G</variation>
    <location>
        <position position="168"/>
    </location>
</feature>
<feature type="sequence conflict" description="In Ref. 2; AAA92044." evidence="2" ref="2">
    <original>A</original>
    <variation>V</variation>
    <location>
        <position position="200"/>
    </location>
</feature>
<feature type="sequence conflict" description="In Ref. 2; AAA92044." evidence="2" ref="2">
    <original>TA</original>
    <variation>DR</variation>
    <location>
        <begin position="206"/>
        <end position="207"/>
    </location>
</feature>
<evidence type="ECO:0000250" key="1"/>
<evidence type="ECO:0000305" key="2"/>